<dbReference type="EMBL" id="AE005674">
    <property type="protein sequence ID" value="AAN44254.2"/>
    <property type="molecule type" value="Genomic_DNA"/>
</dbReference>
<dbReference type="EMBL" id="AE014073">
    <property type="protein sequence ID" value="AAP18080.1"/>
    <property type="molecule type" value="Genomic_DNA"/>
</dbReference>
<dbReference type="RefSeq" id="NP_708547.2">
    <property type="nucleotide sequence ID" value="NC_004337.2"/>
</dbReference>
<dbReference type="SMR" id="P0ADA4"/>
<dbReference type="STRING" id="198214.SF2765"/>
<dbReference type="PaxDb" id="198214-SF2765"/>
<dbReference type="GeneID" id="1025716"/>
<dbReference type="KEGG" id="sfl:SF2765"/>
<dbReference type="KEGG" id="sfx:S2958"/>
<dbReference type="PATRIC" id="fig|198214.7.peg.3291"/>
<dbReference type="HOGENOM" id="CLU_029425_0_1_6"/>
<dbReference type="Proteomes" id="UP000001006">
    <property type="component" value="Chromosome"/>
</dbReference>
<dbReference type="Proteomes" id="UP000002673">
    <property type="component" value="Chromosome"/>
</dbReference>
<dbReference type="GO" id="GO:0032153">
    <property type="term" value="C:cell division site"/>
    <property type="evidence" value="ECO:0007669"/>
    <property type="project" value="TreeGrafter"/>
</dbReference>
<dbReference type="GO" id="GO:0009279">
    <property type="term" value="C:cell outer membrane"/>
    <property type="evidence" value="ECO:0007669"/>
    <property type="project" value="TreeGrafter"/>
</dbReference>
<dbReference type="GO" id="GO:0005886">
    <property type="term" value="C:plasma membrane"/>
    <property type="evidence" value="ECO:0007669"/>
    <property type="project" value="UniProtKB-SubCell"/>
</dbReference>
<dbReference type="GO" id="GO:0004222">
    <property type="term" value="F:metalloendopeptidase activity"/>
    <property type="evidence" value="ECO:0007669"/>
    <property type="project" value="TreeGrafter"/>
</dbReference>
<dbReference type="GO" id="GO:0051301">
    <property type="term" value="P:cell division"/>
    <property type="evidence" value="ECO:0007669"/>
    <property type="project" value="UniProtKB-KW"/>
</dbReference>
<dbReference type="CDD" id="cd00118">
    <property type="entry name" value="LysM"/>
    <property type="match status" value="1"/>
</dbReference>
<dbReference type="CDD" id="cd12797">
    <property type="entry name" value="M23_peptidase"/>
    <property type="match status" value="1"/>
</dbReference>
<dbReference type="FunFam" id="3.10.350.10:FF:000008">
    <property type="entry name" value="Murein hydrolase activator NlpD"/>
    <property type="match status" value="1"/>
</dbReference>
<dbReference type="FunFam" id="2.70.70.10:FF:000004">
    <property type="entry name" value="NlpD family lipoprotein"/>
    <property type="match status" value="1"/>
</dbReference>
<dbReference type="Gene3D" id="2.70.70.10">
    <property type="entry name" value="Glucose Permease (Domain IIA)"/>
    <property type="match status" value="1"/>
</dbReference>
<dbReference type="Gene3D" id="3.10.350.10">
    <property type="entry name" value="LysM domain"/>
    <property type="match status" value="1"/>
</dbReference>
<dbReference type="InterPro" id="IPR050570">
    <property type="entry name" value="Cell_wall_metabolism_enzyme"/>
</dbReference>
<dbReference type="InterPro" id="IPR011055">
    <property type="entry name" value="Dup_hybrid_motif"/>
</dbReference>
<dbReference type="InterPro" id="IPR018392">
    <property type="entry name" value="LysM_dom"/>
</dbReference>
<dbReference type="InterPro" id="IPR036779">
    <property type="entry name" value="LysM_dom_sf"/>
</dbReference>
<dbReference type="InterPro" id="IPR016047">
    <property type="entry name" value="Peptidase_M23"/>
</dbReference>
<dbReference type="NCBIfam" id="NF008123">
    <property type="entry name" value="PRK10871.1"/>
    <property type="match status" value="1"/>
</dbReference>
<dbReference type="PANTHER" id="PTHR21666:SF263">
    <property type="entry name" value="MUREIN HYDROLASE ACTIVATOR NLPD"/>
    <property type="match status" value="1"/>
</dbReference>
<dbReference type="PANTHER" id="PTHR21666">
    <property type="entry name" value="PEPTIDASE-RELATED"/>
    <property type="match status" value="1"/>
</dbReference>
<dbReference type="Pfam" id="PF01476">
    <property type="entry name" value="LysM"/>
    <property type="match status" value="1"/>
</dbReference>
<dbReference type="Pfam" id="PF01551">
    <property type="entry name" value="Peptidase_M23"/>
    <property type="match status" value="1"/>
</dbReference>
<dbReference type="SMART" id="SM00257">
    <property type="entry name" value="LysM"/>
    <property type="match status" value="1"/>
</dbReference>
<dbReference type="SUPFAM" id="SSF51261">
    <property type="entry name" value="Duplicated hybrid motif"/>
    <property type="match status" value="1"/>
</dbReference>
<dbReference type="PROSITE" id="PS51782">
    <property type="entry name" value="LYSM"/>
    <property type="match status" value="1"/>
</dbReference>
<dbReference type="PROSITE" id="PS51257">
    <property type="entry name" value="PROKAR_LIPOPROTEIN"/>
    <property type="match status" value="1"/>
</dbReference>
<keyword id="KW-0131">Cell cycle</keyword>
<keyword id="KW-0132">Cell division</keyword>
<keyword id="KW-0997">Cell inner membrane</keyword>
<keyword id="KW-1003">Cell membrane</keyword>
<keyword id="KW-0449">Lipoprotein</keyword>
<keyword id="KW-0472">Membrane</keyword>
<keyword id="KW-0564">Palmitate</keyword>
<keyword id="KW-1185">Reference proteome</keyword>
<keyword id="KW-0677">Repeat</keyword>
<keyword id="KW-0732">Signal</keyword>
<reference key="1">
    <citation type="journal article" date="2002" name="Nucleic Acids Res.">
        <title>Genome sequence of Shigella flexneri 2a: insights into pathogenicity through comparison with genomes of Escherichia coli K12 and O157.</title>
        <authorList>
            <person name="Jin Q."/>
            <person name="Yuan Z."/>
            <person name="Xu J."/>
            <person name="Wang Y."/>
            <person name="Shen Y."/>
            <person name="Lu W."/>
            <person name="Wang J."/>
            <person name="Liu H."/>
            <person name="Yang J."/>
            <person name="Yang F."/>
            <person name="Zhang X."/>
            <person name="Zhang J."/>
            <person name="Yang G."/>
            <person name="Wu H."/>
            <person name="Qu D."/>
            <person name="Dong J."/>
            <person name="Sun L."/>
            <person name="Xue Y."/>
            <person name="Zhao A."/>
            <person name="Gao Y."/>
            <person name="Zhu J."/>
            <person name="Kan B."/>
            <person name="Ding K."/>
            <person name="Chen S."/>
            <person name="Cheng H."/>
            <person name="Yao Z."/>
            <person name="He B."/>
            <person name="Chen R."/>
            <person name="Ma D."/>
            <person name="Qiang B."/>
            <person name="Wen Y."/>
            <person name="Hou Y."/>
            <person name="Yu J."/>
        </authorList>
    </citation>
    <scope>NUCLEOTIDE SEQUENCE [LARGE SCALE GENOMIC DNA]</scope>
    <source>
        <strain>301 / Serotype 2a</strain>
    </source>
</reference>
<reference key="2">
    <citation type="journal article" date="2003" name="Infect. Immun.">
        <title>Complete genome sequence and comparative genomics of Shigella flexneri serotype 2a strain 2457T.</title>
        <authorList>
            <person name="Wei J."/>
            <person name="Goldberg M.B."/>
            <person name="Burland V."/>
            <person name="Venkatesan M.M."/>
            <person name="Deng W."/>
            <person name="Fournier G."/>
            <person name="Mayhew G.F."/>
            <person name="Plunkett G. III"/>
            <person name="Rose D.J."/>
            <person name="Darling A."/>
            <person name="Mau B."/>
            <person name="Perna N.T."/>
            <person name="Payne S.M."/>
            <person name="Runyen-Janecky L.J."/>
            <person name="Zhou S."/>
            <person name="Schwartz D.C."/>
            <person name="Blattner F.R."/>
        </authorList>
    </citation>
    <scope>NUCLEOTIDE SEQUENCE [LARGE SCALE GENOMIC DNA]</scope>
    <source>
        <strain>ATCC 700930 / 2457T / Serotype 2a</strain>
    </source>
</reference>
<accession>P0ADA4</accession>
<accession>P33648</accession>
<organism>
    <name type="scientific">Shigella flexneri</name>
    <dbReference type="NCBI Taxonomy" id="623"/>
    <lineage>
        <taxon>Bacteria</taxon>
        <taxon>Pseudomonadati</taxon>
        <taxon>Pseudomonadota</taxon>
        <taxon>Gammaproteobacteria</taxon>
        <taxon>Enterobacterales</taxon>
        <taxon>Enterobacteriaceae</taxon>
        <taxon>Shigella</taxon>
    </lineage>
</organism>
<sequence>MSAGSPKFTVRRIAALSLVSLWLAGCSDTSNPPAPVSSVNGNAPANTNSGMLITPPPKMGTTSTAQQPQIQPVQQPQIQATQQPQIQPVQPVAQQPVQMENGRIVYNRQYGNIPKGSYSGSTYTVKKGDTLFYIAWITGNDFRDLAQRNNIQAPYALNVGQTLQVGNASGTPITGGNAITQADAAEQGVVIKPAQNSTVAVASQPTITYSESSGEQSANKMLPNNKPTATTVTAPVTVPTASTTEPTVSSTSTSTPISTWRWPTEGKVIETFGASEGGNKGIDIAGSKGQAIIATADGRVVYAGNALRGYGNLIIIKHNDDYLSAYAHNDTMLVREQQEVKAGQKIATMGSTGTSSTRLHFEIRYKGKSVNPLRYLPQR</sequence>
<comment type="function">
    <text evidence="1">Activator of the cell wall hydrolase AmiC. Required for septal murein cleavage and daughter cell separation during cell division (By similarity).</text>
</comment>
<comment type="subcellular location">
    <subcellularLocation>
        <location evidence="5">Cell inner membrane</location>
        <topology evidence="2">Lipid-anchor</topology>
    </subcellularLocation>
    <text evidence="1">Localizes at the septal ring.</text>
</comment>
<comment type="similarity">
    <text evidence="5">Belongs to the E.coli NlpD/Haemophilus LppB family.</text>
</comment>
<protein>
    <recommendedName>
        <fullName>Murein hydrolase activator NlpD</fullName>
    </recommendedName>
</protein>
<gene>
    <name type="primary">nlpD</name>
    <name type="ordered locus">SF2765</name>
    <name type="ordered locus">S2958</name>
</gene>
<feature type="signal peptide" evidence="2">
    <location>
        <begin position="1"/>
        <end position="25"/>
    </location>
</feature>
<feature type="chain" id="PRO_0000043183" description="Murein hydrolase activator NlpD">
    <location>
        <begin position="26"/>
        <end position="379"/>
    </location>
</feature>
<feature type="repeat" description="1-1">
    <location>
        <begin position="66"/>
        <end position="73"/>
    </location>
</feature>
<feature type="repeat" description="1-2; approximate">
    <location>
        <begin position="74"/>
        <end position="81"/>
    </location>
</feature>
<feature type="repeat" description="1-3">
    <location>
        <begin position="82"/>
        <end position="89"/>
    </location>
</feature>
<feature type="repeat" description="1-4; approximate">
    <location>
        <begin position="90"/>
        <end position="97"/>
    </location>
</feature>
<feature type="domain" description="LysM" evidence="3">
    <location>
        <begin position="121"/>
        <end position="165"/>
    </location>
</feature>
<feature type="repeat" description="2-1">
    <location>
        <begin position="205"/>
        <end position="211"/>
    </location>
</feature>
<feature type="repeat" description="2-2">
    <location>
        <begin position="227"/>
        <end position="233"/>
    </location>
</feature>
<feature type="repeat" description="2-3">
    <location>
        <begin position="239"/>
        <end position="245"/>
    </location>
</feature>
<feature type="repeat" description="2-4">
    <location>
        <begin position="246"/>
        <end position="252"/>
    </location>
</feature>
<feature type="region of interest" description="Disordered" evidence="4">
    <location>
        <begin position="30"/>
        <end position="67"/>
    </location>
</feature>
<feature type="region of interest" description="4 X 8 AA tandem repeats of Q-Q-P-Q-I-Q-P-V">
    <location>
        <begin position="66"/>
        <end position="97"/>
    </location>
</feature>
<feature type="region of interest" description="4 X 7 AA approximate repeats">
    <location>
        <begin position="205"/>
        <end position="252"/>
    </location>
</feature>
<feature type="region of interest" description="Disordered" evidence="4">
    <location>
        <begin position="210"/>
        <end position="231"/>
    </location>
</feature>
<feature type="region of interest" description="Disordered" evidence="4">
    <location>
        <begin position="240"/>
        <end position="259"/>
    </location>
</feature>
<feature type="compositionally biased region" description="Polar residues" evidence="4">
    <location>
        <begin position="30"/>
        <end position="51"/>
    </location>
</feature>
<feature type="compositionally biased region" description="Polar residues" evidence="4">
    <location>
        <begin position="210"/>
        <end position="219"/>
    </location>
</feature>
<feature type="lipid moiety-binding region" description="N-palmitoyl cysteine" evidence="2">
    <location>
        <position position="26"/>
    </location>
</feature>
<feature type="lipid moiety-binding region" description="S-diacylglycerol cysteine" evidence="2">
    <location>
        <position position="26"/>
    </location>
</feature>
<evidence type="ECO:0000250" key="1"/>
<evidence type="ECO:0000255" key="2">
    <source>
        <dbReference type="PROSITE-ProRule" id="PRU00303"/>
    </source>
</evidence>
<evidence type="ECO:0000255" key="3">
    <source>
        <dbReference type="PROSITE-ProRule" id="PRU01118"/>
    </source>
</evidence>
<evidence type="ECO:0000256" key="4">
    <source>
        <dbReference type="SAM" id="MobiDB-lite"/>
    </source>
</evidence>
<evidence type="ECO:0000305" key="5"/>
<proteinExistence type="inferred from homology"/>
<name>NLPD_SHIFL</name>